<evidence type="ECO:0000255" key="1">
    <source>
        <dbReference type="HAMAP-Rule" id="MF_01546"/>
    </source>
</evidence>
<feature type="chain" id="PRO_1000146762" description="Protein AaeX">
    <location>
        <begin position="1"/>
        <end position="67"/>
    </location>
</feature>
<feature type="transmembrane region" description="Helical" evidence="1">
    <location>
        <begin position="3"/>
        <end position="23"/>
    </location>
</feature>
<feature type="transmembrane region" description="Helical" evidence="1">
    <location>
        <begin position="43"/>
        <end position="63"/>
    </location>
</feature>
<accession>B5REW4</accession>
<proteinExistence type="inferred from homology"/>
<dbReference type="EMBL" id="AM933173">
    <property type="protein sequence ID" value="CAR39054.1"/>
    <property type="molecule type" value="Genomic_DNA"/>
</dbReference>
<dbReference type="RefSeq" id="WP_000051842.1">
    <property type="nucleotide sequence ID" value="NC_011274.1"/>
</dbReference>
<dbReference type="KEGG" id="seg:SG3256"/>
<dbReference type="HOGENOM" id="CLU_188292_0_0_6"/>
<dbReference type="Proteomes" id="UP000008321">
    <property type="component" value="Chromosome"/>
</dbReference>
<dbReference type="GO" id="GO:0005886">
    <property type="term" value="C:plasma membrane"/>
    <property type="evidence" value="ECO:0007669"/>
    <property type="project" value="UniProtKB-SubCell"/>
</dbReference>
<dbReference type="HAMAP" id="MF_01546">
    <property type="entry name" value="AaeX"/>
    <property type="match status" value="1"/>
</dbReference>
<dbReference type="InterPro" id="IPR012451">
    <property type="entry name" value="DUF1656"/>
</dbReference>
<dbReference type="NCBIfam" id="NF008615">
    <property type="entry name" value="PRK11594.1"/>
    <property type="match status" value="1"/>
</dbReference>
<dbReference type="Pfam" id="PF07869">
    <property type="entry name" value="DUF1656"/>
    <property type="match status" value="1"/>
</dbReference>
<protein>
    <recommendedName>
        <fullName evidence="1">Protein AaeX</fullName>
    </recommendedName>
</protein>
<reference key="1">
    <citation type="journal article" date="2008" name="Genome Res.">
        <title>Comparative genome analysis of Salmonella enteritidis PT4 and Salmonella gallinarum 287/91 provides insights into evolutionary and host adaptation pathways.</title>
        <authorList>
            <person name="Thomson N.R."/>
            <person name="Clayton D.J."/>
            <person name="Windhorst D."/>
            <person name="Vernikos G."/>
            <person name="Davidson S."/>
            <person name="Churcher C."/>
            <person name="Quail M.A."/>
            <person name="Stevens M."/>
            <person name="Jones M.A."/>
            <person name="Watson M."/>
            <person name="Barron A."/>
            <person name="Layton A."/>
            <person name="Pickard D."/>
            <person name="Kingsley R.A."/>
            <person name="Bignell A."/>
            <person name="Clark L."/>
            <person name="Harris B."/>
            <person name="Ormond D."/>
            <person name="Abdellah Z."/>
            <person name="Brooks K."/>
            <person name="Cherevach I."/>
            <person name="Chillingworth T."/>
            <person name="Woodward J."/>
            <person name="Norberczak H."/>
            <person name="Lord A."/>
            <person name="Arrowsmith C."/>
            <person name="Jagels K."/>
            <person name="Moule S."/>
            <person name="Mungall K."/>
            <person name="Saunders M."/>
            <person name="Whitehead S."/>
            <person name="Chabalgoity J.A."/>
            <person name="Maskell D."/>
            <person name="Humphreys T."/>
            <person name="Roberts M."/>
            <person name="Barrow P.A."/>
            <person name="Dougan G."/>
            <person name="Parkhill J."/>
        </authorList>
    </citation>
    <scope>NUCLEOTIDE SEQUENCE [LARGE SCALE GENOMIC DNA]</scope>
    <source>
        <strain>287/91 / NCTC 13346</strain>
    </source>
</reference>
<name>AAEX_SALG2</name>
<comment type="subcellular location">
    <subcellularLocation>
        <location evidence="1">Cell membrane</location>
        <topology evidence="1">Multi-pass membrane protein</topology>
    </subcellularLocation>
</comment>
<comment type="similarity">
    <text evidence="1">Belongs to the AaeX family.</text>
</comment>
<gene>
    <name evidence="1" type="primary">aaeX</name>
    <name type="ordered locus">SG3256</name>
</gene>
<keyword id="KW-1003">Cell membrane</keyword>
<keyword id="KW-0472">Membrane</keyword>
<keyword id="KW-0812">Transmembrane</keyword>
<keyword id="KW-1133">Transmembrane helix</keyword>
<organism>
    <name type="scientific">Salmonella gallinarum (strain 287/91 / NCTC 13346)</name>
    <dbReference type="NCBI Taxonomy" id="550538"/>
    <lineage>
        <taxon>Bacteria</taxon>
        <taxon>Pseudomonadati</taxon>
        <taxon>Pseudomonadota</taxon>
        <taxon>Gammaproteobacteria</taxon>
        <taxon>Enterobacterales</taxon>
        <taxon>Enterobacteriaceae</taxon>
        <taxon>Salmonella</taxon>
    </lineage>
</organism>
<sequence>MSLFPVIVVFGLSFPPIFFKLLLSLAIFWLVRRMLVPTGIYDFVWHPALFNTALYCCLFYLISRLFV</sequence>